<organism>
    <name type="scientific">Sulfurisphaera tokodaii (strain DSM 16993 / JCM 10545 / NBRC 100140 / 7)</name>
    <name type="common">Sulfolobus tokodaii</name>
    <dbReference type="NCBI Taxonomy" id="273063"/>
    <lineage>
        <taxon>Archaea</taxon>
        <taxon>Thermoproteota</taxon>
        <taxon>Thermoprotei</taxon>
        <taxon>Sulfolobales</taxon>
        <taxon>Sulfolobaceae</taxon>
        <taxon>Sulfurisphaera</taxon>
    </lineage>
</organism>
<gene>
    <name evidence="1" type="primary">egsA</name>
    <name type="ordered locus">STK_03440</name>
</gene>
<protein>
    <recommendedName>
        <fullName evidence="1">Glycerol-1-phosphate dehydrogenase [NAD(P)+]</fullName>
        <shortName evidence="1">G1P dehydrogenase</shortName>
        <shortName evidence="1">G1PDH</shortName>
        <ecNumber evidence="1">1.1.1.261</ecNumber>
    </recommendedName>
    <alternativeName>
        <fullName evidence="1">Enantiomeric glycerophosphate synthase</fullName>
    </alternativeName>
    <alternativeName>
        <fullName evidence="1">sn-glycerol-1-phosphate dehydrogenase</fullName>
    </alternativeName>
</protein>
<proteinExistence type="inferred from homology"/>
<comment type="function">
    <text evidence="1">Catalyzes the NAD(P)H-dependent reduction of dihydroxyacetonephosphate (DHAP or glycerone phosphate) to glycerol 1-phosphate (G1P). The G1P thus generated is used as the glycerophosphate backbone of phospholipids in the cellular membranes of Archaea.</text>
</comment>
<comment type="catalytic activity">
    <reaction evidence="1">
        <text>sn-glycerol 1-phosphate + NAD(+) = dihydroxyacetone phosphate + NADH + H(+)</text>
        <dbReference type="Rhea" id="RHEA:21412"/>
        <dbReference type="ChEBI" id="CHEBI:15378"/>
        <dbReference type="ChEBI" id="CHEBI:57540"/>
        <dbReference type="ChEBI" id="CHEBI:57642"/>
        <dbReference type="ChEBI" id="CHEBI:57685"/>
        <dbReference type="ChEBI" id="CHEBI:57945"/>
        <dbReference type="EC" id="1.1.1.261"/>
    </reaction>
</comment>
<comment type="catalytic activity">
    <reaction evidence="1">
        <text>sn-glycerol 1-phosphate + NADP(+) = dihydroxyacetone phosphate + NADPH + H(+)</text>
        <dbReference type="Rhea" id="RHEA:21416"/>
        <dbReference type="ChEBI" id="CHEBI:15378"/>
        <dbReference type="ChEBI" id="CHEBI:57642"/>
        <dbReference type="ChEBI" id="CHEBI:57685"/>
        <dbReference type="ChEBI" id="CHEBI:57783"/>
        <dbReference type="ChEBI" id="CHEBI:58349"/>
        <dbReference type="EC" id="1.1.1.261"/>
    </reaction>
</comment>
<comment type="cofactor">
    <cofactor evidence="1">
        <name>Zn(2+)</name>
        <dbReference type="ChEBI" id="CHEBI:29105"/>
    </cofactor>
    <text evidence="1">Binds 1 zinc ion per subunit.</text>
</comment>
<comment type="pathway">
    <text evidence="1">Membrane lipid metabolism; glycerophospholipid metabolism.</text>
</comment>
<comment type="subunit">
    <text evidence="1">Homodimer.</text>
</comment>
<comment type="subcellular location">
    <subcellularLocation>
        <location evidence="1">Cytoplasm</location>
    </subcellularLocation>
</comment>
<comment type="similarity">
    <text evidence="1">Belongs to the glycerol-1-phosphate dehydrogenase family.</text>
</comment>
<reference key="1">
    <citation type="journal article" date="2001" name="DNA Res.">
        <title>Complete genome sequence of an aerobic thermoacidophilic Crenarchaeon, Sulfolobus tokodaii strain7.</title>
        <authorList>
            <person name="Kawarabayasi Y."/>
            <person name="Hino Y."/>
            <person name="Horikawa H."/>
            <person name="Jin-no K."/>
            <person name="Takahashi M."/>
            <person name="Sekine M."/>
            <person name="Baba S."/>
            <person name="Ankai A."/>
            <person name="Kosugi H."/>
            <person name="Hosoyama A."/>
            <person name="Fukui S."/>
            <person name="Nagai Y."/>
            <person name="Nishijima K."/>
            <person name="Otsuka R."/>
            <person name="Nakazawa H."/>
            <person name="Takamiya M."/>
            <person name="Kato Y."/>
            <person name="Yoshizawa T."/>
            <person name="Tanaka T."/>
            <person name="Kudoh Y."/>
            <person name="Yamazaki J."/>
            <person name="Kushida N."/>
            <person name="Oguchi A."/>
            <person name="Aoki K."/>
            <person name="Masuda S."/>
            <person name="Yanagii M."/>
            <person name="Nishimura M."/>
            <person name="Yamagishi A."/>
            <person name="Oshima T."/>
            <person name="Kikuchi H."/>
        </authorList>
    </citation>
    <scope>NUCLEOTIDE SEQUENCE [LARGE SCALE GENOMIC DNA]</scope>
    <source>
        <strain>DSM 16993 / JCM 10545 / NBRC 100140 / 7</strain>
    </source>
</reference>
<sequence>MELKEHIIDLPKKVYIGYDIIDNIKEYILSLNLSGPFLIVTGPLVRKIITDKIIENFKDESVEVVEVKIASIDEVNKVEEMAKGSRINTIIGVGGGNIIDVAKYVAYRIGKEFVSLPTAPSHDGITSPFASIKGLGKPTSVKAKGPIAIIADINVLASAPRRLINAGIGDTIGKITAVRDWQLAAKLRGEYYGDYTASLALMSAKHALSCAKILDKDVRAGVRVLTEALISSGVAMGMAGSTRPASGSEHLFAHAIEILYPDKALHGELVALGTILMAYIHGINWKKIKKAMKKVGLPTKAKQLGIPDEIIIKALTIAHTIRPERYTILGDRGLTWEAAEKIAKETGIID</sequence>
<feature type="chain" id="PRO_0000157354" description="Glycerol-1-phosphate dehydrogenase [NAD(P)+]">
    <location>
        <begin position="1"/>
        <end position="350"/>
    </location>
</feature>
<feature type="binding site" evidence="1">
    <location>
        <begin position="96"/>
        <end position="100"/>
    </location>
    <ligand>
        <name>NAD(+)</name>
        <dbReference type="ChEBI" id="CHEBI:57540"/>
    </ligand>
</feature>
<feature type="binding site" evidence="1">
    <location>
        <begin position="118"/>
        <end position="121"/>
    </location>
    <ligand>
        <name>NAD(+)</name>
        <dbReference type="ChEBI" id="CHEBI:57540"/>
    </ligand>
</feature>
<feature type="binding site" evidence="1">
    <location>
        <position position="123"/>
    </location>
    <ligand>
        <name>substrate</name>
    </ligand>
</feature>
<feature type="binding site" evidence="1">
    <location>
        <position position="127"/>
    </location>
    <ligand>
        <name>NAD(+)</name>
        <dbReference type="ChEBI" id="CHEBI:57540"/>
    </ligand>
</feature>
<feature type="binding site" evidence="1">
    <location>
        <position position="170"/>
    </location>
    <ligand>
        <name>substrate</name>
    </ligand>
</feature>
<feature type="binding site" evidence="1">
    <location>
        <position position="170"/>
    </location>
    <ligand>
        <name>Zn(2+)</name>
        <dbReference type="ChEBI" id="CHEBI:29105"/>
        <note>catalytic</note>
    </ligand>
</feature>
<feature type="binding site" evidence="1">
    <location>
        <position position="250"/>
    </location>
    <ligand>
        <name>Zn(2+)</name>
        <dbReference type="ChEBI" id="CHEBI:29105"/>
        <note>catalytic</note>
    </ligand>
</feature>
<feature type="binding site" evidence="1">
    <location>
        <position position="254"/>
    </location>
    <ligand>
        <name>substrate</name>
    </ligand>
</feature>
<feature type="binding site" evidence="1">
    <location>
        <position position="266"/>
    </location>
    <ligand>
        <name>Zn(2+)</name>
        <dbReference type="ChEBI" id="CHEBI:29105"/>
        <note>catalytic</note>
    </ligand>
</feature>
<dbReference type="EC" id="1.1.1.261" evidence="1"/>
<dbReference type="EMBL" id="BA000023">
    <property type="protein sequence ID" value="BAB65322.1"/>
    <property type="molecule type" value="Genomic_DNA"/>
</dbReference>
<dbReference type="RefSeq" id="WP_010978305.1">
    <property type="nucleotide sequence ID" value="NC_003106.2"/>
</dbReference>
<dbReference type="SMR" id="P58460"/>
<dbReference type="STRING" id="273063.STK_03440"/>
<dbReference type="GeneID" id="1458263"/>
<dbReference type="KEGG" id="sto:STK_03440"/>
<dbReference type="PATRIC" id="fig|273063.9.peg.401"/>
<dbReference type="eggNOG" id="arCOG00982">
    <property type="taxonomic scope" value="Archaea"/>
</dbReference>
<dbReference type="OrthoDB" id="8656at2157"/>
<dbReference type="SABIO-RK" id="P58460"/>
<dbReference type="UniPathway" id="UPA00940"/>
<dbReference type="Proteomes" id="UP000001015">
    <property type="component" value="Chromosome"/>
</dbReference>
<dbReference type="GO" id="GO:0005737">
    <property type="term" value="C:cytoplasm"/>
    <property type="evidence" value="ECO:0007669"/>
    <property type="project" value="UniProtKB-SubCell"/>
</dbReference>
<dbReference type="GO" id="GO:0106357">
    <property type="term" value="F:glycerol-1-phosphate dehydrogenase (NAD+) activity"/>
    <property type="evidence" value="ECO:0007669"/>
    <property type="project" value="RHEA"/>
</dbReference>
<dbReference type="GO" id="GO:0106358">
    <property type="term" value="F:glycerol-1-phosphate dehydrogenase (NADP+) activity"/>
    <property type="evidence" value="ECO:0007669"/>
    <property type="project" value="RHEA"/>
</dbReference>
<dbReference type="GO" id="GO:0046872">
    <property type="term" value="F:metal ion binding"/>
    <property type="evidence" value="ECO:0007669"/>
    <property type="project" value="UniProtKB-KW"/>
</dbReference>
<dbReference type="GO" id="GO:0006650">
    <property type="term" value="P:glycerophospholipid metabolic process"/>
    <property type="evidence" value="ECO:0007669"/>
    <property type="project" value="UniProtKB-UniRule"/>
</dbReference>
<dbReference type="GO" id="GO:0008654">
    <property type="term" value="P:phospholipid biosynthetic process"/>
    <property type="evidence" value="ECO:0007669"/>
    <property type="project" value="UniProtKB-KW"/>
</dbReference>
<dbReference type="CDD" id="cd08173">
    <property type="entry name" value="Gro1PDH"/>
    <property type="match status" value="1"/>
</dbReference>
<dbReference type="Gene3D" id="3.40.50.1970">
    <property type="match status" value="1"/>
</dbReference>
<dbReference type="Gene3D" id="1.20.1090.10">
    <property type="entry name" value="Dehydroquinate synthase-like - alpha domain"/>
    <property type="match status" value="1"/>
</dbReference>
<dbReference type="HAMAP" id="MF_00497_A">
    <property type="entry name" value="G1P_dehydrogenase_A"/>
    <property type="match status" value="1"/>
</dbReference>
<dbReference type="InterPro" id="IPR023002">
    <property type="entry name" value="G1P_dehydrogenase_arc"/>
</dbReference>
<dbReference type="InterPro" id="IPR032837">
    <property type="entry name" value="G1PDH"/>
</dbReference>
<dbReference type="InterPro" id="IPR016205">
    <property type="entry name" value="Glycerol_DH"/>
</dbReference>
<dbReference type="NCBIfam" id="NF002022">
    <property type="entry name" value="PRK00843.1"/>
    <property type="match status" value="1"/>
</dbReference>
<dbReference type="PANTHER" id="PTHR43616">
    <property type="entry name" value="GLYCEROL DEHYDROGENASE"/>
    <property type="match status" value="1"/>
</dbReference>
<dbReference type="PANTHER" id="PTHR43616:SF5">
    <property type="entry name" value="GLYCEROL DEHYDROGENASE 1"/>
    <property type="match status" value="1"/>
</dbReference>
<dbReference type="Pfam" id="PF13685">
    <property type="entry name" value="Fe-ADH_2"/>
    <property type="match status" value="1"/>
</dbReference>
<dbReference type="PIRSF" id="PIRSF000112">
    <property type="entry name" value="Glycerol_dehydrogenase"/>
    <property type="match status" value="1"/>
</dbReference>
<dbReference type="SUPFAM" id="SSF56796">
    <property type="entry name" value="Dehydroquinate synthase-like"/>
    <property type="match status" value="1"/>
</dbReference>
<accession>P58460</accession>
<keyword id="KW-0963">Cytoplasm</keyword>
<keyword id="KW-0444">Lipid biosynthesis</keyword>
<keyword id="KW-0443">Lipid metabolism</keyword>
<keyword id="KW-0479">Metal-binding</keyword>
<keyword id="KW-0520">NAD</keyword>
<keyword id="KW-0521">NADP</keyword>
<keyword id="KW-0560">Oxidoreductase</keyword>
<keyword id="KW-0594">Phospholipid biosynthesis</keyword>
<keyword id="KW-1208">Phospholipid metabolism</keyword>
<keyword id="KW-1185">Reference proteome</keyword>
<keyword id="KW-0862">Zinc</keyword>
<name>G1PDH_SULTO</name>
<evidence type="ECO:0000255" key="1">
    <source>
        <dbReference type="HAMAP-Rule" id="MF_00497"/>
    </source>
</evidence>